<evidence type="ECO:0000255" key="1">
    <source>
        <dbReference type="HAMAP-Rule" id="MF_00096"/>
    </source>
</evidence>
<evidence type="ECO:0000305" key="2"/>
<organism>
    <name type="scientific">Bordetella parapertussis (strain 12822 / ATCC BAA-587 / NCTC 13253)</name>
    <dbReference type="NCBI Taxonomy" id="257311"/>
    <lineage>
        <taxon>Bacteria</taxon>
        <taxon>Pseudomonadati</taxon>
        <taxon>Pseudomonadota</taxon>
        <taxon>Betaproteobacteria</taxon>
        <taxon>Burkholderiales</taxon>
        <taxon>Alcaligenaceae</taxon>
        <taxon>Bordetella</taxon>
    </lineage>
</organism>
<name>MUTS_BORPA</name>
<feature type="chain" id="PRO_0000115074" description="DNA mismatch repair protein MutS">
    <location>
        <begin position="1"/>
        <end position="883"/>
    </location>
</feature>
<feature type="binding site" evidence="1">
    <location>
        <begin position="633"/>
        <end position="640"/>
    </location>
    <ligand>
        <name>ATP</name>
        <dbReference type="ChEBI" id="CHEBI:30616"/>
    </ligand>
</feature>
<protein>
    <recommendedName>
        <fullName evidence="1">DNA mismatch repair protein MutS</fullName>
    </recommendedName>
</protein>
<dbReference type="EMBL" id="BX640429">
    <property type="protein sequence ID" value="CAE37563.1"/>
    <property type="status" value="ALT_INIT"/>
    <property type="molecule type" value="Genomic_DNA"/>
</dbReference>
<dbReference type="SMR" id="Q7W880"/>
<dbReference type="KEGG" id="bpa:BPP2265"/>
<dbReference type="HOGENOM" id="CLU_002472_3_1_4"/>
<dbReference type="Proteomes" id="UP000001421">
    <property type="component" value="Chromosome"/>
</dbReference>
<dbReference type="GO" id="GO:0005829">
    <property type="term" value="C:cytosol"/>
    <property type="evidence" value="ECO:0007669"/>
    <property type="project" value="TreeGrafter"/>
</dbReference>
<dbReference type="GO" id="GO:0005524">
    <property type="term" value="F:ATP binding"/>
    <property type="evidence" value="ECO:0007669"/>
    <property type="project" value="UniProtKB-UniRule"/>
</dbReference>
<dbReference type="GO" id="GO:0140664">
    <property type="term" value="F:ATP-dependent DNA damage sensor activity"/>
    <property type="evidence" value="ECO:0007669"/>
    <property type="project" value="InterPro"/>
</dbReference>
<dbReference type="GO" id="GO:0003684">
    <property type="term" value="F:damaged DNA binding"/>
    <property type="evidence" value="ECO:0007669"/>
    <property type="project" value="UniProtKB-UniRule"/>
</dbReference>
<dbReference type="GO" id="GO:0030983">
    <property type="term" value="F:mismatched DNA binding"/>
    <property type="evidence" value="ECO:0007669"/>
    <property type="project" value="InterPro"/>
</dbReference>
<dbReference type="GO" id="GO:0006298">
    <property type="term" value="P:mismatch repair"/>
    <property type="evidence" value="ECO:0007669"/>
    <property type="project" value="UniProtKB-UniRule"/>
</dbReference>
<dbReference type="CDD" id="cd03284">
    <property type="entry name" value="ABC_MutS1"/>
    <property type="match status" value="1"/>
</dbReference>
<dbReference type="FunFam" id="1.10.1420.10:FF:000002">
    <property type="entry name" value="DNA mismatch repair protein MutS"/>
    <property type="match status" value="1"/>
</dbReference>
<dbReference type="FunFam" id="3.40.1170.10:FF:000001">
    <property type="entry name" value="DNA mismatch repair protein MutS"/>
    <property type="match status" value="1"/>
</dbReference>
<dbReference type="Gene3D" id="1.10.1420.10">
    <property type="match status" value="2"/>
</dbReference>
<dbReference type="Gene3D" id="6.10.140.430">
    <property type="match status" value="1"/>
</dbReference>
<dbReference type="Gene3D" id="3.40.1170.10">
    <property type="entry name" value="DNA repair protein MutS, domain I"/>
    <property type="match status" value="1"/>
</dbReference>
<dbReference type="Gene3D" id="3.30.420.110">
    <property type="entry name" value="MutS, connector domain"/>
    <property type="match status" value="1"/>
</dbReference>
<dbReference type="Gene3D" id="3.40.50.300">
    <property type="entry name" value="P-loop containing nucleotide triphosphate hydrolases"/>
    <property type="match status" value="1"/>
</dbReference>
<dbReference type="HAMAP" id="MF_00096">
    <property type="entry name" value="MutS"/>
    <property type="match status" value="1"/>
</dbReference>
<dbReference type="InterPro" id="IPR005748">
    <property type="entry name" value="DNA_mismatch_repair_MutS"/>
</dbReference>
<dbReference type="InterPro" id="IPR007695">
    <property type="entry name" value="DNA_mismatch_repair_MutS-lik_N"/>
</dbReference>
<dbReference type="InterPro" id="IPR017261">
    <property type="entry name" value="DNA_mismatch_repair_MutS/MSH"/>
</dbReference>
<dbReference type="InterPro" id="IPR000432">
    <property type="entry name" value="DNA_mismatch_repair_MutS_C"/>
</dbReference>
<dbReference type="InterPro" id="IPR007861">
    <property type="entry name" value="DNA_mismatch_repair_MutS_clamp"/>
</dbReference>
<dbReference type="InterPro" id="IPR007696">
    <property type="entry name" value="DNA_mismatch_repair_MutS_core"/>
</dbReference>
<dbReference type="InterPro" id="IPR016151">
    <property type="entry name" value="DNA_mismatch_repair_MutS_N"/>
</dbReference>
<dbReference type="InterPro" id="IPR036187">
    <property type="entry name" value="DNA_mismatch_repair_MutS_sf"/>
</dbReference>
<dbReference type="InterPro" id="IPR007860">
    <property type="entry name" value="DNA_mmatch_repair_MutS_con_dom"/>
</dbReference>
<dbReference type="InterPro" id="IPR045076">
    <property type="entry name" value="MutS"/>
</dbReference>
<dbReference type="InterPro" id="IPR036678">
    <property type="entry name" value="MutS_con_dom_sf"/>
</dbReference>
<dbReference type="InterPro" id="IPR027417">
    <property type="entry name" value="P-loop_NTPase"/>
</dbReference>
<dbReference type="NCBIfam" id="TIGR01070">
    <property type="entry name" value="mutS1"/>
    <property type="match status" value="1"/>
</dbReference>
<dbReference type="NCBIfam" id="NF003810">
    <property type="entry name" value="PRK05399.1"/>
    <property type="match status" value="1"/>
</dbReference>
<dbReference type="PANTHER" id="PTHR11361:SF34">
    <property type="entry name" value="DNA MISMATCH REPAIR PROTEIN MSH1, MITOCHONDRIAL"/>
    <property type="match status" value="1"/>
</dbReference>
<dbReference type="PANTHER" id="PTHR11361">
    <property type="entry name" value="DNA MISMATCH REPAIR PROTEIN MUTS FAMILY MEMBER"/>
    <property type="match status" value="1"/>
</dbReference>
<dbReference type="Pfam" id="PF01624">
    <property type="entry name" value="MutS_I"/>
    <property type="match status" value="1"/>
</dbReference>
<dbReference type="Pfam" id="PF05188">
    <property type="entry name" value="MutS_II"/>
    <property type="match status" value="1"/>
</dbReference>
<dbReference type="Pfam" id="PF05192">
    <property type="entry name" value="MutS_III"/>
    <property type="match status" value="1"/>
</dbReference>
<dbReference type="Pfam" id="PF05190">
    <property type="entry name" value="MutS_IV"/>
    <property type="match status" value="1"/>
</dbReference>
<dbReference type="Pfam" id="PF00488">
    <property type="entry name" value="MutS_V"/>
    <property type="match status" value="1"/>
</dbReference>
<dbReference type="PIRSF" id="PIRSF037677">
    <property type="entry name" value="DNA_mis_repair_Msh6"/>
    <property type="match status" value="1"/>
</dbReference>
<dbReference type="SMART" id="SM00534">
    <property type="entry name" value="MUTSac"/>
    <property type="match status" value="1"/>
</dbReference>
<dbReference type="SMART" id="SM00533">
    <property type="entry name" value="MUTSd"/>
    <property type="match status" value="1"/>
</dbReference>
<dbReference type="SUPFAM" id="SSF55271">
    <property type="entry name" value="DNA repair protein MutS, domain I"/>
    <property type="match status" value="1"/>
</dbReference>
<dbReference type="SUPFAM" id="SSF53150">
    <property type="entry name" value="DNA repair protein MutS, domain II"/>
    <property type="match status" value="1"/>
</dbReference>
<dbReference type="SUPFAM" id="SSF48334">
    <property type="entry name" value="DNA repair protein MutS, domain III"/>
    <property type="match status" value="1"/>
</dbReference>
<dbReference type="SUPFAM" id="SSF52540">
    <property type="entry name" value="P-loop containing nucleoside triphosphate hydrolases"/>
    <property type="match status" value="1"/>
</dbReference>
<dbReference type="PROSITE" id="PS00486">
    <property type="entry name" value="DNA_MISMATCH_REPAIR_2"/>
    <property type="match status" value="1"/>
</dbReference>
<gene>
    <name evidence="1" type="primary">mutS</name>
    <name type="ordered locus">BPP2265</name>
</gene>
<comment type="function">
    <text evidence="1">This protein is involved in the repair of mismatches in DNA. It is possible that it carries out the mismatch recognition step. This protein has a weak ATPase activity.</text>
</comment>
<comment type="similarity">
    <text evidence="1">Belongs to the DNA mismatch repair MutS family.</text>
</comment>
<comment type="sequence caution" evidence="2">
    <conflict type="erroneous initiation">
        <sequence resource="EMBL-CDS" id="CAE37563"/>
    </conflict>
</comment>
<keyword id="KW-0067">ATP-binding</keyword>
<keyword id="KW-0227">DNA damage</keyword>
<keyword id="KW-0234">DNA repair</keyword>
<keyword id="KW-0238">DNA-binding</keyword>
<keyword id="KW-0547">Nucleotide-binding</keyword>
<sequence>MSSTPKQTTGDALAGHTPMMQQYLRLKAEAGPLLLFYRMGDFYEMFYEDAERAARLLNLTLTKRGNSNGTPIPMAGIPVHAMEQYLARLVALGESVAICEQIGDPAAAKGPVERRIVRIVTPGTLTDEALLPAKADRALAAVCVTGKREPRAGLAWLNLASGAFHVTECAPGQLESELHRIAPAELIQAESAELHMAFEGARTRVPDWHFEADGARAQLLAHFKTDSLGGFDVEDMPAAVCAAGALLRYAARTQSQALAHVQTIAAERPGQYVLLDPVTRRNLELTQTLSGEESPTLFSLLDGCRTPMGSRLLRRWLHHPLRENEPVLARQHAIATMLTVRQEGEQAFAAAGLLETLRDALNAFPDIERIAARVALRSVRPRELASLRDALVALPALHASLAPLSGSPRARELAAQLAMPPDIGELLARAVASEPAVAIRDGGVIAAGFDSELDELRALATDGGDFLVQLEARERERTGIGNLRVEFNRVHGFYIEVSKGQTDKVPEDYRRRQTLKNAERYITPELKTWEDRVLSAQDRSLAREKWLYEQLLDALAQYVRPLSQCASALAELDTLAALAEHARRHDWVAPELIDGAEIDIEAGRHPVVERAIERFTPNGCRLDQTRRMLLITGPNMGGKSTYMRQVALIALLARTGSFVPATRARVGRLDRIFTRIGAADDLAGGRSTFMMEMTEAAAILAASTPASLVLMDEIGRGTSTYDGLALAWAIAYRLLTHNRALTLFATHYFELTRLPAEQPTAANVHLAAAESAGGIVFLHEVREGPASRSYGIQVAQRAGVPAAVIRQASRELERLEAQGAPTPQLGLFAAALDADVQSQAMTEQAEDAAALAQLRDQLAAIDPDSLTPREALDALYRLKQHLT</sequence>
<accession>Q7W880</accession>
<reference key="1">
    <citation type="journal article" date="2003" name="Nat. Genet.">
        <title>Comparative analysis of the genome sequences of Bordetella pertussis, Bordetella parapertussis and Bordetella bronchiseptica.</title>
        <authorList>
            <person name="Parkhill J."/>
            <person name="Sebaihia M."/>
            <person name="Preston A."/>
            <person name="Murphy L.D."/>
            <person name="Thomson N.R."/>
            <person name="Harris D.E."/>
            <person name="Holden M.T.G."/>
            <person name="Churcher C.M."/>
            <person name="Bentley S.D."/>
            <person name="Mungall K.L."/>
            <person name="Cerdeno-Tarraga A.-M."/>
            <person name="Temple L."/>
            <person name="James K.D."/>
            <person name="Harris B."/>
            <person name="Quail M.A."/>
            <person name="Achtman M."/>
            <person name="Atkin R."/>
            <person name="Baker S."/>
            <person name="Basham D."/>
            <person name="Bason N."/>
            <person name="Cherevach I."/>
            <person name="Chillingworth T."/>
            <person name="Collins M."/>
            <person name="Cronin A."/>
            <person name="Davis P."/>
            <person name="Doggett J."/>
            <person name="Feltwell T."/>
            <person name="Goble A."/>
            <person name="Hamlin N."/>
            <person name="Hauser H."/>
            <person name="Holroyd S."/>
            <person name="Jagels K."/>
            <person name="Leather S."/>
            <person name="Moule S."/>
            <person name="Norberczak H."/>
            <person name="O'Neil S."/>
            <person name="Ormond D."/>
            <person name="Price C."/>
            <person name="Rabbinowitsch E."/>
            <person name="Rutter S."/>
            <person name="Sanders M."/>
            <person name="Saunders D."/>
            <person name="Seeger K."/>
            <person name="Sharp S."/>
            <person name="Simmonds M."/>
            <person name="Skelton J."/>
            <person name="Squares R."/>
            <person name="Squares S."/>
            <person name="Stevens K."/>
            <person name="Unwin L."/>
            <person name="Whitehead S."/>
            <person name="Barrell B.G."/>
            <person name="Maskell D.J."/>
        </authorList>
    </citation>
    <scope>NUCLEOTIDE SEQUENCE [LARGE SCALE GENOMIC DNA]</scope>
    <source>
        <strain>12822 / ATCC BAA-587 / NCTC 13253</strain>
    </source>
</reference>
<proteinExistence type="inferred from homology"/>